<organism>
    <name type="scientific">Clostridium tetani (strain Massachusetts / E88)</name>
    <dbReference type="NCBI Taxonomy" id="212717"/>
    <lineage>
        <taxon>Bacteria</taxon>
        <taxon>Bacillati</taxon>
        <taxon>Bacillota</taxon>
        <taxon>Clostridia</taxon>
        <taxon>Eubacteriales</taxon>
        <taxon>Clostridiaceae</taxon>
        <taxon>Clostridium</taxon>
    </lineage>
</organism>
<evidence type="ECO:0000255" key="1">
    <source>
        <dbReference type="HAMAP-Rule" id="MF_00328"/>
    </source>
</evidence>
<gene>
    <name evidence="1" type="primary">gmk</name>
    <name type="ordered locus">CTC_01216</name>
</gene>
<protein>
    <recommendedName>
        <fullName evidence="1">Guanylate kinase</fullName>
        <ecNumber evidence="1">2.7.4.8</ecNumber>
    </recommendedName>
    <alternativeName>
        <fullName evidence="1">GMP kinase</fullName>
    </alternativeName>
</protein>
<reference key="1">
    <citation type="journal article" date="2003" name="Proc. Natl. Acad. Sci. U.S.A.">
        <title>The genome sequence of Clostridium tetani, the causative agent of tetanus disease.</title>
        <authorList>
            <person name="Brueggemann H."/>
            <person name="Baeumer S."/>
            <person name="Fricke W.F."/>
            <person name="Wiezer A."/>
            <person name="Liesegang H."/>
            <person name="Decker I."/>
            <person name="Herzberg C."/>
            <person name="Martinez-Arias R."/>
            <person name="Merkl R."/>
            <person name="Henne A."/>
            <person name="Gottschalk G."/>
        </authorList>
    </citation>
    <scope>NUCLEOTIDE SEQUENCE [LARGE SCALE GENOMIC DNA]</scope>
    <source>
        <strain>Massachusetts / E88</strain>
    </source>
</reference>
<comment type="function">
    <text evidence="1">Essential for recycling GMP and indirectly, cGMP.</text>
</comment>
<comment type="catalytic activity">
    <reaction evidence="1">
        <text>GMP + ATP = GDP + ADP</text>
        <dbReference type="Rhea" id="RHEA:20780"/>
        <dbReference type="ChEBI" id="CHEBI:30616"/>
        <dbReference type="ChEBI" id="CHEBI:58115"/>
        <dbReference type="ChEBI" id="CHEBI:58189"/>
        <dbReference type="ChEBI" id="CHEBI:456216"/>
        <dbReference type="EC" id="2.7.4.8"/>
    </reaction>
</comment>
<comment type="subcellular location">
    <subcellularLocation>
        <location evidence="1">Cytoplasm</location>
    </subcellularLocation>
</comment>
<comment type="similarity">
    <text evidence="1">Belongs to the guanylate kinase family.</text>
</comment>
<accession>Q895Q5</accession>
<sequence>MEKGLLIVISGPSGTGKGTVCKELLRNNNFWFSVSSTTRDPREGEIQGKSYYFMSKEEFEDKIKENDFLEYAKVYGNYYGTPKSKVIEMLDKGKDVILEIDIQGALQVKENYKEGIFIFILPPSMEELKNRIIKRGTETEESLMTRFKSAYKEINYVSKYNYAVVNDKVHDAVEKIQSIISAEKCRVDRIKDSILLSKEGIIHEQLYD</sequence>
<feature type="chain" id="PRO_0000170526" description="Guanylate kinase">
    <location>
        <begin position="1"/>
        <end position="208"/>
    </location>
</feature>
<feature type="domain" description="Guanylate kinase-like" evidence="1">
    <location>
        <begin position="4"/>
        <end position="181"/>
    </location>
</feature>
<feature type="binding site" evidence="1">
    <location>
        <begin position="11"/>
        <end position="18"/>
    </location>
    <ligand>
        <name>ATP</name>
        <dbReference type="ChEBI" id="CHEBI:30616"/>
    </ligand>
</feature>
<dbReference type="EC" id="2.7.4.8" evidence="1"/>
<dbReference type="EMBL" id="AE015927">
    <property type="protein sequence ID" value="AAO35785.1"/>
    <property type="molecule type" value="Genomic_DNA"/>
</dbReference>
<dbReference type="RefSeq" id="WP_011099447.1">
    <property type="nucleotide sequence ID" value="NC_004557.1"/>
</dbReference>
<dbReference type="SMR" id="Q895Q5"/>
<dbReference type="STRING" id="212717.CTC_01216"/>
<dbReference type="GeneID" id="24252732"/>
<dbReference type="KEGG" id="ctc:CTC_01216"/>
<dbReference type="HOGENOM" id="CLU_001715_1_2_9"/>
<dbReference type="OrthoDB" id="9808150at2"/>
<dbReference type="Proteomes" id="UP000001412">
    <property type="component" value="Chromosome"/>
</dbReference>
<dbReference type="GO" id="GO:0005829">
    <property type="term" value="C:cytosol"/>
    <property type="evidence" value="ECO:0007669"/>
    <property type="project" value="TreeGrafter"/>
</dbReference>
<dbReference type="GO" id="GO:0005524">
    <property type="term" value="F:ATP binding"/>
    <property type="evidence" value="ECO:0007669"/>
    <property type="project" value="UniProtKB-UniRule"/>
</dbReference>
<dbReference type="GO" id="GO:0004385">
    <property type="term" value="F:guanylate kinase activity"/>
    <property type="evidence" value="ECO:0007669"/>
    <property type="project" value="UniProtKB-UniRule"/>
</dbReference>
<dbReference type="CDD" id="cd00071">
    <property type="entry name" value="GMPK"/>
    <property type="match status" value="1"/>
</dbReference>
<dbReference type="FunFam" id="3.30.63.10:FF:000005">
    <property type="entry name" value="Guanylate kinase"/>
    <property type="match status" value="1"/>
</dbReference>
<dbReference type="FunFam" id="3.40.50.300:FF:000855">
    <property type="entry name" value="Guanylate kinase"/>
    <property type="match status" value="1"/>
</dbReference>
<dbReference type="Gene3D" id="3.30.63.10">
    <property type="entry name" value="Guanylate Kinase phosphate binding domain"/>
    <property type="match status" value="1"/>
</dbReference>
<dbReference type="Gene3D" id="3.40.50.300">
    <property type="entry name" value="P-loop containing nucleotide triphosphate hydrolases"/>
    <property type="match status" value="1"/>
</dbReference>
<dbReference type="HAMAP" id="MF_00328">
    <property type="entry name" value="Guanylate_kinase"/>
    <property type="match status" value="1"/>
</dbReference>
<dbReference type="InterPro" id="IPR008145">
    <property type="entry name" value="GK/Ca_channel_bsu"/>
</dbReference>
<dbReference type="InterPro" id="IPR008144">
    <property type="entry name" value="Guanylate_kin-like_dom"/>
</dbReference>
<dbReference type="InterPro" id="IPR017665">
    <property type="entry name" value="Guanylate_kinase"/>
</dbReference>
<dbReference type="InterPro" id="IPR020590">
    <property type="entry name" value="Guanylate_kinase_CS"/>
</dbReference>
<dbReference type="InterPro" id="IPR027417">
    <property type="entry name" value="P-loop_NTPase"/>
</dbReference>
<dbReference type="NCBIfam" id="TIGR03263">
    <property type="entry name" value="guanyl_kin"/>
    <property type="match status" value="1"/>
</dbReference>
<dbReference type="PANTHER" id="PTHR23117:SF13">
    <property type="entry name" value="GUANYLATE KINASE"/>
    <property type="match status" value="1"/>
</dbReference>
<dbReference type="PANTHER" id="PTHR23117">
    <property type="entry name" value="GUANYLATE KINASE-RELATED"/>
    <property type="match status" value="1"/>
</dbReference>
<dbReference type="Pfam" id="PF00625">
    <property type="entry name" value="Guanylate_kin"/>
    <property type="match status" value="1"/>
</dbReference>
<dbReference type="SMART" id="SM00072">
    <property type="entry name" value="GuKc"/>
    <property type="match status" value="1"/>
</dbReference>
<dbReference type="SUPFAM" id="SSF52540">
    <property type="entry name" value="P-loop containing nucleoside triphosphate hydrolases"/>
    <property type="match status" value="1"/>
</dbReference>
<dbReference type="PROSITE" id="PS00856">
    <property type="entry name" value="GUANYLATE_KINASE_1"/>
    <property type="match status" value="1"/>
</dbReference>
<dbReference type="PROSITE" id="PS50052">
    <property type="entry name" value="GUANYLATE_KINASE_2"/>
    <property type="match status" value="1"/>
</dbReference>
<keyword id="KW-0067">ATP-binding</keyword>
<keyword id="KW-0963">Cytoplasm</keyword>
<keyword id="KW-0418">Kinase</keyword>
<keyword id="KW-0547">Nucleotide-binding</keyword>
<keyword id="KW-1185">Reference proteome</keyword>
<keyword id="KW-0808">Transferase</keyword>
<name>KGUA_CLOTE</name>
<proteinExistence type="inferred from homology"/>